<dbReference type="EC" id="2.7.11.-" evidence="1"/>
<dbReference type="EC" id="2.7.4.-" evidence="1"/>
<dbReference type="EMBL" id="AE004969">
    <property type="protein sequence ID" value="AAW89061.1"/>
    <property type="molecule type" value="Genomic_DNA"/>
</dbReference>
<dbReference type="RefSeq" id="WP_003687702.1">
    <property type="nucleotide sequence ID" value="NC_002946.2"/>
</dbReference>
<dbReference type="RefSeq" id="YP_207473.1">
    <property type="nucleotide sequence ID" value="NC_002946.2"/>
</dbReference>
<dbReference type="SMR" id="Q5F9S6"/>
<dbReference type="STRING" id="242231.NGO_0314"/>
<dbReference type="GeneID" id="66752652"/>
<dbReference type="KEGG" id="ngo:NGO_0314"/>
<dbReference type="PATRIC" id="fig|242231.10.peg.384"/>
<dbReference type="HOGENOM" id="CLU_052030_0_2_4"/>
<dbReference type="Proteomes" id="UP000000535">
    <property type="component" value="Chromosome"/>
</dbReference>
<dbReference type="GO" id="GO:0005524">
    <property type="term" value="F:ATP binding"/>
    <property type="evidence" value="ECO:0007669"/>
    <property type="project" value="UniProtKB-UniRule"/>
</dbReference>
<dbReference type="GO" id="GO:0000287">
    <property type="term" value="F:magnesium ion binding"/>
    <property type="evidence" value="ECO:0007669"/>
    <property type="project" value="UniProtKB-UniRule"/>
</dbReference>
<dbReference type="GO" id="GO:0000155">
    <property type="term" value="F:phosphorelay sensor kinase activity"/>
    <property type="evidence" value="ECO:0007669"/>
    <property type="project" value="InterPro"/>
</dbReference>
<dbReference type="GO" id="GO:0004674">
    <property type="term" value="F:protein serine/threonine kinase activity"/>
    <property type="evidence" value="ECO:0007669"/>
    <property type="project" value="UniProtKB-KW"/>
</dbReference>
<dbReference type="GO" id="GO:0004712">
    <property type="term" value="F:protein serine/threonine/tyrosine kinase activity"/>
    <property type="evidence" value="ECO:0007669"/>
    <property type="project" value="UniProtKB-UniRule"/>
</dbReference>
<dbReference type="GO" id="GO:0006109">
    <property type="term" value="P:regulation of carbohydrate metabolic process"/>
    <property type="evidence" value="ECO:0007669"/>
    <property type="project" value="UniProtKB-UniRule"/>
</dbReference>
<dbReference type="CDD" id="cd01918">
    <property type="entry name" value="HprK_C"/>
    <property type="match status" value="1"/>
</dbReference>
<dbReference type="FunFam" id="3.40.50.300:FF:000174">
    <property type="entry name" value="HPr kinase/phosphorylase"/>
    <property type="match status" value="1"/>
</dbReference>
<dbReference type="Gene3D" id="3.40.1390.20">
    <property type="entry name" value="HprK N-terminal domain-like"/>
    <property type="match status" value="1"/>
</dbReference>
<dbReference type="Gene3D" id="3.40.50.300">
    <property type="entry name" value="P-loop containing nucleotide triphosphate hydrolases"/>
    <property type="match status" value="1"/>
</dbReference>
<dbReference type="HAMAP" id="MF_01249">
    <property type="entry name" value="HPr_kinase"/>
    <property type="match status" value="1"/>
</dbReference>
<dbReference type="InterPro" id="IPR003755">
    <property type="entry name" value="HPr(Ser)_kin/Pase"/>
</dbReference>
<dbReference type="InterPro" id="IPR011104">
    <property type="entry name" value="Hpr_kin/Pase_C"/>
</dbReference>
<dbReference type="InterPro" id="IPR011126">
    <property type="entry name" value="Hpr_kin/Pase_Hpr_N"/>
</dbReference>
<dbReference type="InterPro" id="IPR027417">
    <property type="entry name" value="P-loop_NTPase"/>
</dbReference>
<dbReference type="InterPro" id="IPR028979">
    <property type="entry name" value="Ser_kin/Pase_Hpr-like_N_sf"/>
</dbReference>
<dbReference type="NCBIfam" id="TIGR00679">
    <property type="entry name" value="hpr-ser"/>
    <property type="match status" value="1"/>
</dbReference>
<dbReference type="PANTHER" id="PTHR30305:SF1">
    <property type="entry name" value="HPR KINASE_PHOSPHORYLASE"/>
    <property type="match status" value="1"/>
</dbReference>
<dbReference type="PANTHER" id="PTHR30305">
    <property type="entry name" value="PROTEIN YJDM-RELATED"/>
    <property type="match status" value="1"/>
</dbReference>
<dbReference type="Pfam" id="PF07475">
    <property type="entry name" value="Hpr_kinase_C"/>
    <property type="match status" value="1"/>
</dbReference>
<dbReference type="Pfam" id="PF02603">
    <property type="entry name" value="Hpr_kinase_N"/>
    <property type="match status" value="1"/>
</dbReference>
<dbReference type="SUPFAM" id="SSF75138">
    <property type="entry name" value="HprK N-terminal domain-like"/>
    <property type="match status" value="1"/>
</dbReference>
<dbReference type="SUPFAM" id="SSF53795">
    <property type="entry name" value="PEP carboxykinase-like"/>
    <property type="match status" value="1"/>
</dbReference>
<protein>
    <recommendedName>
        <fullName evidence="1">HPr kinase/phosphorylase</fullName>
        <shortName evidence="1">HPrK/P</shortName>
        <ecNumber evidence="1">2.7.11.-</ecNumber>
        <ecNumber evidence="1">2.7.4.-</ecNumber>
    </recommendedName>
    <alternativeName>
        <fullName evidence="1">HPr(Ser) kinase/phosphorylase</fullName>
    </alternativeName>
</protein>
<keyword id="KW-0067">ATP-binding</keyword>
<keyword id="KW-0418">Kinase</keyword>
<keyword id="KW-0460">Magnesium</keyword>
<keyword id="KW-0479">Metal-binding</keyword>
<keyword id="KW-0511">Multifunctional enzyme</keyword>
<keyword id="KW-0547">Nucleotide-binding</keyword>
<keyword id="KW-1185">Reference proteome</keyword>
<keyword id="KW-0723">Serine/threonine-protein kinase</keyword>
<keyword id="KW-0808">Transferase</keyword>
<organism>
    <name type="scientific">Neisseria gonorrhoeae (strain ATCC 700825 / FA 1090)</name>
    <dbReference type="NCBI Taxonomy" id="242231"/>
    <lineage>
        <taxon>Bacteria</taxon>
        <taxon>Pseudomonadati</taxon>
        <taxon>Pseudomonadota</taxon>
        <taxon>Betaproteobacteria</taxon>
        <taxon>Neisseriales</taxon>
        <taxon>Neisseriaceae</taxon>
        <taxon>Neisseria</taxon>
    </lineage>
</organism>
<accession>Q5F9S6</accession>
<proteinExistence type="inferred from homology"/>
<reference key="1">
    <citation type="submission" date="2003-03" db="EMBL/GenBank/DDBJ databases">
        <title>The complete genome sequence of Neisseria gonorrhoeae.</title>
        <authorList>
            <person name="Lewis L.A."/>
            <person name="Gillaspy A.F."/>
            <person name="McLaughlin R.E."/>
            <person name="Gipson M."/>
            <person name="Ducey T.F."/>
            <person name="Ownbey T."/>
            <person name="Hartman K."/>
            <person name="Nydick C."/>
            <person name="Carson M.B."/>
            <person name="Vaughn J."/>
            <person name="Thomson C."/>
            <person name="Song L."/>
            <person name="Lin S."/>
            <person name="Yuan X."/>
            <person name="Najar F."/>
            <person name="Zhan M."/>
            <person name="Ren Q."/>
            <person name="Zhu H."/>
            <person name="Qi S."/>
            <person name="Kenton S.M."/>
            <person name="Lai H."/>
            <person name="White J.D."/>
            <person name="Clifton S."/>
            <person name="Roe B.A."/>
            <person name="Dyer D.W."/>
        </authorList>
    </citation>
    <scope>NUCLEOTIDE SEQUENCE [LARGE SCALE GENOMIC DNA]</scope>
    <source>
        <strain>ATCC 700825 / FA 1090</strain>
    </source>
</reference>
<evidence type="ECO:0000255" key="1">
    <source>
        <dbReference type="HAMAP-Rule" id="MF_01249"/>
    </source>
</evidence>
<sequence>MPSISVRRLFDDNQYKLQLAWAAGNSGADNRIGVEADKPVLALVGHLNFIHPNQIQVVGLAESEYLNRLESGETGYQFGDLFDISMSLVIVANDLPVSPGLRDYCHKNDIPLLTSKLESPYLMDVLRIYLQRTLAASSVKHGVFLDVFEIGVLITGHSGLGKSELALELISRGHSLIADDAVELFRIGPETLEGRCSPMLRDFLEVRGLGILNIRHIFGETSIRPKKILQLIINLVEADDEYMKQLDRLSIRTETESILNVNVRSVTLPVAVGRNLAVLVEAAVRNYILQLRGKDSTREFLERHQTQLKENEQNHENRPD</sequence>
<feature type="chain" id="PRO_1000067161" description="HPr kinase/phosphorylase">
    <location>
        <begin position="1"/>
        <end position="320"/>
    </location>
</feature>
<feature type="region of interest" description="Important for the catalytic mechanism of both phosphorylation and dephosphorylation" evidence="1">
    <location>
        <begin position="204"/>
        <end position="213"/>
    </location>
</feature>
<feature type="region of interest" description="Important for the catalytic mechanism of dephosphorylation" evidence="1">
    <location>
        <begin position="269"/>
        <end position="274"/>
    </location>
</feature>
<feature type="active site" evidence="1">
    <location>
        <position position="141"/>
    </location>
</feature>
<feature type="active site" evidence="1">
    <location>
        <position position="162"/>
    </location>
</feature>
<feature type="active site" description="Proton acceptor; for phosphorylation activity. Proton donor; for dephosphorylation activity" evidence="1">
    <location>
        <position position="180"/>
    </location>
</feature>
<feature type="active site" evidence="1">
    <location>
        <position position="248"/>
    </location>
</feature>
<feature type="binding site" evidence="1">
    <location>
        <begin position="156"/>
        <end position="163"/>
    </location>
    <ligand>
        <name>ATP</name>
        <dbReference type="ChEBI" id="CHEBI:30616"/>
    </ligand>
</feature>
<feature type="binding site" evidence="1">
    <location>
        <position position="163"/>
    </location>
    <ligand>
        <name>Mg(2+)</name>
        <dbReference type="ChEBI" id="CHEBI:18420"/>
    </ligand>
</feature>
<feature type="binding site" evidence="1">
    <location>
        <position position="205"/>
    </location>
    <ligand>
        <name>Mg(2+)</name>
        <dbReference type="ChEBI" id="CHEBI:18420"/>
    </ligand>
</feature>
<gene>
    <name evidence="1" type="primary">hprK</name>
    <name type="ordered locus">NGO_0314</name>
</gene>
<comment type="function">
    <text evidence="1">Catalyzes the ATP- as well as the pyrophosphate-dependent phosphorylation of a specific serine residue in HPr, a phosphocarrier protein of the phosphoenolpyruvate-dependent sugar phosphotransferase system (PTS). HprK/P also catalyzes the pyrophosphate-producing, inorganic phosphate-dependent dephosphorylation (phosphorolysis) of seryl-phosphorylated HPr (P-Ser-HPr).</text>
</comment>
<comment type="catalytic activity">
    <reaction evidence="1">
        <text>[HPr protein]-L-serine + ATP = [HPr protein]-O-phospho-L-serine + ADP + H(+)</text>
        <dbReference type="Rhea" id="RHEA:46600"/>
        <dbReference type="Rhea" id="RHEA-COMP:11602"/>
        <dbReference type="Rhea" id="RHEA-COMP:11603"/>
        <dbReference type="ChEBI" id="CHEBI:15378"/>
        <dbReference type="ChEBI" id="CHEBI:29999"/>
        <dbReference type="ChEBI" id="CHEBI:30616"/>
        <dbReference type="ChEBI" id="CHEBI:83421"/>
        <dbReference type="ChEBI" id="CHEBI:456216"/>
    </reaction>
</comment>
<comment type="catalytic activity">
    <reaction evidence="1">
        <text>[HPr protein]-O-phospho-L-serine + phosphate + H(+) = [HPr protein]-L-serine + diphosphate</text>
        <dbReference type="Rhea" id="RHEA:46604"/>
        <dbReference type="Rhea" id="RHEA-COMP:11602"/>
        <dbReference type="Rhea" id="RHEA-COMP:11603"/>
        <dbReference type="ChEBI" id="CHEBI:15378"/>
        <dbReference type="ChEBI" id="CHEBI:29999"/>
        <dbReference type="ChEBI" id="CHEBI:33019"/>
        <dbReference type="ChEBI" id="CHEBI:43474"/>
        <dbReference type="ChEBI" id="CHEBI:83421"/>
    </reaction>
</comment>
<comment type="cofactor">
    <cofactor evidence="1">
        <name>Mg(2+)</name>
        <dbReference type="ChEBI" id="CHEBI:18420"/>
    </cofactor>
</comment>
<comment type="subunit">
    <text evidence="1">Homohexamer.</text>
</comment>
<comment type="domain">
    <text evidence="1">The Walker A ATP-binding motif also binds Pi and PPi.</text>
</comment>
<comment type="miscellaneous">
    <text evidence="1">Both phosphorylation and phosphorolysis are carried out by the same active site and suggest a common mechanism for both reactions.</text>
</comment>
<comment type="similarity">
    <text evidence="1">Belongs to the HPrK/P family.</text>
</comment>
<name>HPRK_NEIG1</name>